<accession>Q5MNI2</accession>
<name>LOLU1_EPIUN</name>
<protein>
    <recommendedName>
        <fullName evidence="2">Loline biosynthesis cluster 1 transcription factor lolU1</fullName>
    </recommendedName>
</protein>
<sequence length="495" mass="55143">MASPGNHAIVAPGWTRSEDGSLTRPLDLVENWLLARIQRANTPPGREAEGLTYKLKLRLPQDIDDPIPYLRRAWLVFRYVQPLIGAIYPPYSERDETGRYLVTVPLMDPEEWLRLSFHVNQGTQAVFRDVDDAGKIFQPRPTAMAYWFPPSSTLIIRSTHLRFDAVGIYKATNTFMLGLESVFRLGLDANLDCYTTDVKQPSLPPGIDYILGFPPQETPVPHRVERAVDELMRHWHHGLYSLSLPVREGSEDAAPANTQHLVTLFDEPTLEAIVAGCKKLGVSVSAAVHASIVRVWASFPQQQHTGARNMLIPLVANLRPLLDPKWVVPDYALGLCIFVVPFCLTGGFEDLTQRLGAVYSRDLSALPSDPAGDPVSFLELLPLYESREAAFLGSLPVAGCPPFRVPNLSSLGVLERYLARAYGKKGAQAPVCEIEDVALVNATTDPTIEFQLFTFRGTMRLYLYYNDAYYTEDFLAPVMEMVRDSLLQELGLGGS</sequence>
<comment type="function">
    <text evidence="4">Transcriptional regulator that may regulate the expression of the loline biosynthesis cluster 1, one of the 2 clusters involved in the biosynthesis of loline alkaloids, potent insecticidal agents composed of a pyrrolizidine ring system and an uncommon ether bridge linking carbons 2 and 7 (PubMed:15654104).</text>
</comment>
<comment type="subcellular location">
    <subcellularLocation>
        <location evidence="3">Nucleus</location>
    </subcellularLocation>
</comment>
<comment type="induction">
    <text evidence="1">Expression is induced in loline alkaloid-producing cultures as well as in planta (PubMed:15654104).</text>
</comment>
<evidence type="ECO:0000269" key="1">
    <source>
    </source>
</evidence>
<evidence type="ECO:0000303" key="2">
    <source>
    </source>
</evidence>
<evidence type="ECO:0000305" key="3"/>
<evidence type="ECO:0000305" key="4">
    <source>
    </source>
</evidence>
<feature type="chain" id="PRO_0000444367" description="Loline biosynthesis cluster 1 transcription factor lolU1">
    <location>
        <begin position="1"/>
        <end position="495"/>
    </location>
</feature>
<organism>
    <name type="scientific">Epichloe uncinata</name>
    <name type="common">Endophyte fungus</name>
    <name type="synonym">Neotyphodium uncinatum</name>
    <dbReference type="NCBI Taxonomy" id="5050"/>
    <lineage>
        <taxon>Eukaryota</taxon>
        <taxon>Fungi</taxon>
        <taxon>Dikarya</taxon>
        <taxon>Ascomycota</taxon>
        <taxon>Pezizomycotina</taxon>
        <taxon>Sordariomycetes</taxon>
        <taxon>Hypocreomycetidae</taxon>
        <taxon>Hypocreales</taxon>
        <taxon>Clavicipitaceae</taxon>
        <taxon>Epichloe</taxon>
    </lineage>
</organism>
<keyword id="KW-0017">Alkaloid metabolism</keyword>
<keyword id="KW-0539">Nucleus</keyword>
<keyword id="KW-0804">Transcription</keyword>
<keyword id="KW-0805">Transcription regulation</keyword>
<proteinExistence type="evidence at transcript level"/>
<reference key="1">
    <citation type="journal article" date="2005" name="Genetics">
        <title>Gene clusters for insecticidal loline alkaloids in the grass-endophytic fungus Neotyphodium uncinatum.</title>
        <authorList>
            <person name="Spiering M.J."/>
            <person name="Moon C.D."/>
            <person name="Wilkinson H.H."/>
            <person name="Schardl C.L."/>
        </authorList>
    </citation>
    <scope>NUCLEOTIDE SEQUENCE [GENOMIC DNA]</scope>
    <scope>INDUCTION</scope>
    <scope>FUNCTION</scope>
    <source>
        <strain>CBS 102646</strain>
    </source>
</reference>
<dbReference type="EMBL" id="AY723749">
    <property type="protein sequence ID" value="AAV68707.1"/>
    <property type="molecule type" value="Genomic_DNA"/>
</dbReference>
<dbReference type="SMR" id="Q5MNI2"/>
<dbReference type="GO" id="GO:0005634">
    <property type="term" value="C:nucleus"/>
    <property type="evidence" value="ECO:0007669"/>
    <property type="project" value="UniProtKB-SubCell"/>
</dbReference>
<dbReference type="GO" id="GO:0009820">
    <property type="term" value="P:alkaloid metabolic process"/>
    <property type="evidence" value="ECO:0007669"/>
    <property type="project" value="UniProtKB-KW"/>
</dbReference>
<dbReference type="Gene3D" id="3.30.559.10">
    <property type="entry name" value="Chloramphenicol acetyltransferase-like domain"/>
    <property type="match status" value="1"/>
</dbReference>
<dbReference type="Gene3D" id="3.30.559.30">
    <property type="entry name" value="Nonribosomal peptide synthetase, condensation domain"/>
    <property type="match status" value="2"/>
</dbReference>
<dbReference type="InterPro" id="IPR023213">
    <property type="entry name" value="CAT-like_dom_sf"/>
</dbReference>
<dbReference type="PANTHER" id="PTHR42034">
    <property type="entry name" value="CHROMOSOME 7, WHOLE GENOME SHOTGUN SEQUENCE-RELATED"/>
    <property type="match status" value="1"/>
</dbReference>
<dbReference type="PANTHER" id="PTHR42034:SF1">
    <property type="entry name" value="CONDENSATION DOMAIN-CONTAINING PROTEIN"/>
    <property type="match status" value="1"/>
</dbReference>
<dbReference type="SUPFAM" id="SSF52777">
    <property type="entry name" value="CoA-dependent acyltransferases"/>
    <property type="match status" value="1"/>
</dbReference>
<gene>
    <name evidence="2" type="primary">lolU1</name>
    <name evidence="2" type="synonym">lolU</name>
</gene>